<evidence type="ECO:0000250" key="1"/>
<evidence type="ECO:0000255" key="2">
    <source>
        <dbReference type="PROSITE-ProRule" id="PRU00092"/>
    </source>
</evidence>
<evidence type="ECO:0000256" key="3">
    <source>
        <dbReference type="SAM" id="MobiDB-lite"/>
    </source>
</evidence>
<evidence type="ECO:0000305" key="4"/>
<organism>
    <name type="scientific">Meyerozyma guilliermondii (strain ATCC 6260 / CBS 566 / DSM 6381 / JCM 1539 / NBRC 10279 / NRRL Y-324)</name>
    <name type="common">Yeast</name>
    <name type="synonym">Candida guilliermondii</name>
    <dbReference type="NCBI Taxonomy" id="294746"/>
    <lineage>
        <taxon>Eukaryota</taxon>
        <taxon>Fungi</taxon>
        <taxon>Dikarya</taxon>
        <taxon>Ascomycota</taxon>
        <taxon>Saccharomycotina</taxon>
        <taxon>Pichiomycetes</taxon>
        <taxon>Debaryomycetaceae</taxon>
        <taxon>Meyerozyma</taxon>
    </lineage>
</organism>
<gene>
    <name type="primary">PXR1</name>
    <name type="ORF">PGUG_05876</name>
</gene>
<proteinExistence type="inferred from homology"/>
<protein>
    <recommendedName>
        <fullName>Protein PXR1</fullName>
    </recommendedName>
    <alternativeName>
        <fullName>PinX1-related protein 1</fullName>
    </alternativeName>
</protein>
<keyword id="KW-0539">Nucleus</keyword>
<keyword id="KW-1185">Reference proteome</keyword>
<keyword id="KW-0690">Ribosome biogenesis</keyword>
<keyword id="KW-0698">rRNA processing</keyword>
<reference key="1">
    <citation type="journal article" date="2009" name="Nature">
        <title>Evolution of pathogenicity and sexual reproduction in eight Candida genomes.</title>
        <authorList>
            <person name="Butler G."/>
            <person name="Rasmussen M.D."/>
            <person name="Lin M.F."/>
            <person name="Santos M.A.S."/>
            <person name="Sakthikumar S."/>
            <person name="Munro C.A."/>
            <person name="Rheinbay E."/>
            <person name="Grabherr M."/>
            <person name="Forche A."/>
            <person name="Reedy J.L."/>
            <person name="Agrafioti I."/>
            <person name="Arnaud M.B."/>
            <person name="Bates S."/>
            <person name="Brown A.J.P."/>
            <person name="Brunke S."/>
            <person name="Costanzo M.C."/>
            <person name="Fitzpatrick D.A."/>
            <person name="de Groot P.W.J."/>
            <person name="Harris D."/>
            <person name="Hoyer L.L."/>
            <person name="Hube B."/>
            <person name="Klis F.M."/>
            <person name="Kodira C."/>
            <person name="Lennard N."/>
            <person name="Logue M.E."/>
            <person name="Martin R."/>
            <person name="Neiman A.M."/>
            <person name="Nikolaou E."/>
            <person name="Quail M.A."/>
            <person name="Quinn J."/>
            <person name="Santos M.C."/>
            <person name="Schmitzberger F.F."/>
            <person name="Sherlock G."/>
            <person name="Shah P."/>
            <person name="Silverstein K.A.T."/>
            <person name="Skrzypek M.S."/>
            <person name="Soll D."/>
            <person name="Staggs R."/>
            <person name="Stansfield I."/>
            <person name="Stumpf M.P.H."/>
            <person name="Sudbery P.E."/>
            <person name="Srikantha T."/>
            <person name="Zeng Q."/>
            <person name="Berman J."/>
            <person name="Berriman M."/>
            <person name="Heitman J."/>
            <person name="Gow N.A.R."/>
            <person name="Lorenz M.C."/>
            <person name="Birren B.W."/>
            <person name="Kellis M."/>
            <person name="Cuomo C.A."/>
        </authorList>
    </citation>
    <scope>NUCLEOTIDE SEQUENCE [LARGE SCALE GENOMIC DNA]</scope>
    <source>
        <strain>ATCC 6260 / CBS 566 / DSM 6381 / JCM 1539 / NBRC 10279 / NRRL Y-324</strain>
    </source>
</reference>
<sequence>MGLAGTKVKQRFGLDPRNTSWSNDKSRFGHRYLESMGWAPGKGLGLVEHATTTHVKVSVKDDTVGLGAKLAKRSGTDDLETDSSGLDDFQRILGRLNGRGREVDEALEQKRKDNIINGKWGMHFIKGEVLCSTWDRKSKSHMLKTALEDESEVNFKSSKKRRQSGSEPSRDSTSHAKRMRGDESKKSTRDQSKQERKEKKIKTEKKEKKEKKEKKEKKEKKEKKEKKEKKEKKERDYGNRASPVEPRKHDQISNVGRLSARAKYIKQKRASVMDAKALNEIFMISK</sequence>
<comment type="function">
    <text evidence="1">Involved in rRNA-processing at A0, A1 and A2 sites and negatively regulates telomerase.</text>
</comment>
<comment type="subcellular location">
    <subcellularLocation>
        <location evidence="1">Nucleus</location>
        <location evidence="1">Nucleolus</location>
    </subcellularLocation>
</comment>
<comment type="similarity">
    <text evidence="4">Belongs to the PINX1 family.</text>
</comment>
<name>PXR1_PICGU</name>
<accession>A5DRH5</accession>
<feature type="initiator methionine" description="Removed" evidence="4">
    <location>
        <position position="1"/>
    </location>
</feature>
<feature type="chain" id="PRO_0000324895" description="Protein PXR1">
    <location>
        <begin position="2"/>
        <end position="286"/>
    </location>
</feature>
<feature type="domain" description="G-patch" evidence="2">
    <location>
        <begin position="25"/>
        <end position="71"/>
    </location>
</feature>
<feature type="region of interest" description="Disordered" evidence="3">
    <location>
        <begin position="1"/>
        <end position="20"/>
    </location>
</feature>
<feature type="region of interest" description="Disordered" evidence="3">
    <location>
        <begin position="148"/>
        <end position="255"/>
    </location>
</feature>
<feature type="compositionally biased region" description="Basic and acidic residues" evidence="3">
    <location>
        <begin position="168"/>
        <end position="198"/>
    </location>
</feature>
<feature type="compositionally biased region" description="Basic residues" evidence="3">
    <location>
        <begin position="199"/>
        <end position="230"/>
    </location>
</feature>
<dbReference type="EMBL" id="CH408162">
    <property type="protein sequence ID" value="EDK41778.2"/>
    <property type="molecule type" value="Genomic_DNA"/>
</dbReference>
<dbReference type="RefSeq" id="XP_001482113.1">
    <property type="nucleotide sequence ID" value="XM_001482063.1"/>
</dbReference>
<dbReference type="FunCoup" id="A5DRH5">
    <property type="interactions" value="237"/>
</dbReference>
<dbReference type="STRING" id="294746.A5DRH5"/>
<dbReference type="GeneID" id="5123849"/>
<dbReference type="KEGG" id="pgu:PGUG_05876"/>
<dbReference type="VEuPathDB" id="FungiDB:PGUG_05876"/>
<dbReference type="eggNOG" id="KOG2809">
    <property type="taxonomic scope" value="Eukaryota"/>
</dbReference>
<dbReference type="HOGENOM" id="CLU_052839_0_0_1"/>
<dbReference type="InParanoid" id="A5DRH5"/>
<dbReference type="OMA" id="PCWDQSS"/>
<dbReference type="OrthoDB" id="29523at2759"/>
<dbReference type="Proteomes" id="UP000001997">
    <property type="component" value="Unassembled WGS sequence"/>
</dbReference>
<dbReference type="GO" id="GO:0005730">
    <property type="term" value="C:nucleolus"/>
    <property type="evidence" value="ECO:0007669"/>
    <property type="project" value="UniProtKB-SubCell"/>
</dbReference>
<dbReference type="GO" id="GO:0005654">
    <property type="term" value="C:nucleoplasm"/>
    <property type="evidence" value="ECO:0007669"/>
    <property type="project" value="EnsemblFungi"/>
</dbReference>
<dbReference type="GO" id="GO:0032040">
    <property type="term" value="C:small-subunit processome"/>
    <property type="evidence" value="ECO:0007669"/>
    <property type="project" value="EnsemblFungi"/>
</dbReference>
<dbReference type="GO" id="GO:0008047">
    <property type="term" value="F:enzyme activator activity"/>
    <property type="evidence" value="ECO:0007669"/>
    <property type="project" value="EnsemblFungi"/>
</dbReference>
<dbReference type="GO" id="GO:0003676">
    <property type="term" value="F:nucleic acid binding"/>
    <property type="evidence" value="ECO:0007669"/>
    <property type="project" value="InterPro"/>
</dbReference>
<dbReference type="GO" id="GO:0010521">
    <property type="term" value="F:telomerase inhibitor activity"/>
    <property type="evidence" value="ECO:0007669"/>
    <property type="project" value="EnsemblFungi"/>
</dbReference>
<dbReference type="GO" id="GO:0000494">
    <property type="term" value="P:box C/D sno(s)RNA 3'-end processing"/>
    <property type="evidence" value="ECO:0007669"/>
    <property type="project" value="EnsemblFungi"/>
</dbReference>
<dbReference type="GO" id="GO:0032211">
    <property type="term" value="P:negative regulation of telomere maintenance via telomerase"/>
    <property type="evidence" value="ECO:0007669"/>
    <property type="project" value="EnsemblFungi"/>
</dbReference>
<dbReference type="GO" id="GO:0006364">
    <property type="term" value="P:rRNA processing"/>
    <property type="evidence" value="ECO:0007669"/>
    <property type="project" value="UniProtKB-KW"/>
</dbReference>
<dbReference type="InterPro" id="IPR000467">
    <property type="entry name" value="G_patch_dom"/>
</dbReference>
<dbReference type="InterPro" id="IPR050656">
    <property type="entry name" value="PINX1"/>
</dbReference>
<dbReference type="PANTHER" id="PTHR23149">
    <property type="entry name" value="G PATCH DOMAIN CONTAINING PROTEIN"/>
    <property type="match status" value="1"/>
</dbReference>
<dbReference type="PANTHER" id="PTHR23149:SF31">
    <property type="entry name" value="PROTEIN PXR1"/>
    <property type="match status" value="1"/>
</dbReference>
<dbReference type="Pfam" id="PF01585">
    <property type="entry name" value="G-patch"/>
    <property type="match status" value="1"/>
</dbReference>
<dbReference type="SMART" id="SM00443">
    <property type="entry name" value="G_patch"/>
    <property type="match status" value="1"/>
</dbReference>
<dbReference type="PROSITE" id="PS50174">
    <property type="entry name" value="G_PATCH"/>
    <property type="match status" value="1"/>
</dbReference>